<comment type="function">
    <text evidence="1">Inhibits the expression or activity of extracellular murein hydrolases by interacting, possibly with LrgB, with the holin-like protein CidA. The LrgAB and CidA proteins may affect the proton motive force of the membrane. May be involved in programmed cell death (PCD), possibly triggering PCD in response to antibiotics and environmental stresses.</text>
</comment>
<comment type="subcellular location">
    <subcellularLocation>
        <location evidence="1">Cell membrane</location>
        <topology evidence="1">Multi-pass membrane protein</topology>
    </subcellularLocation>
</comment>
<comment type="similarity">
    <text evidence="1">Belongs to the CidA/LrgA family. LrgA subfamily.</text>
</comment>
<sequence>MSTKKVYSFLSQAFIFSAIMLISNIIATHLPIPMPSSVIGLVILFSLLCLKVIKLEQVESLGTALTGIIGFLFVPSGISVINSLGVMGQYFVQILTVIVVATVILLAVTGLFAQFILGKDKKETEDTKELKVVNKGRKHGKVA</sequence>
<dbReference type="EMBL" id="CP000227">
    <property type="protein sequence ID" value="ACM15682.1"/>
    <property type="molecule type" value="Genomic_DNA"/>
</dbReference>
<dbReference type="SMR" id="B9ISZ4"/>
<dbReference type="KEGG" id="bcq:BCQ_5282"/>
<dbReference type="HOGENOM" id="CLU_113736_0_1_9"/>
<dbReference type="Proteomes" id="UP000000441">
    <property type="component" value="Chromosome"/>
</dbReference>
<dbReference type="GO" id="GO:0005886">
    <property type="term" value="C:plasma membrane"/>
    <property type="evidence" value="ECO:0007669"/>
    <property type="project" value="UniProtKB-SubCell"/>
</dbReference>
<dbReference type="GO" id="GO:0019835">
    <property type="term" value="P:cytolysis"/>
    <property type="evidence" value="ECO:0007669"/>
    <property type="project" value="UniProtKB-UniRule"/>
</dbReference>
<dbReference type="GO" id="GO:0031640">
    <property type="term" value="P:killing of cells of another organism"/>
    <property type="evidence" value="ECO:0007669"/>
    <property type="project" value="UniProtKB-KW"/>
</dbReference>
<dbReference type="GO" id="GO:0012501">
    <property type="term" value="P:programmed cell death"/>
    <property type="evidence" value="ECO:0007669"/>
    <property type="project" value="UniProtKB-UniRule"/>
</dbReference>
<dbReference type="HAMAP" id="MF_01141">
    <property type="entry name" value="LrgA"/>
    <property type="match status" value="1"/>
</dbReference>
<dbReference type="InterPro" id="IPR023736">
    <property type="entry name" value="Antiholin-like_LrgA"/>
</dbReference>
<dbReference type="InterPro" id="IPR005538">
    <property type="entry name" value="LrgA/CidA"/>
</dbReference>
<dbReference type="NCBIfam" id="NF003155">
    <property type="entry name" value="PRK04125.1"/>
    <property type="match status" value="1"/>
</dbReference>
<dbReference type="PANTHER" id="PTHR33931:SF4">
    <property type="entry name" value="ANTIHOLIN-LIKE PROTEIN LRGA"/>
    <property type="match status" value="1"/>
</dbReference>
<dbReference type="PANTHER" id="PTHR33931">
    <property type="entry name" value="HOLIN-LIKE PROTEIN CIDA-RELATED"/>
    <property type="match status" value="1"/>
</dbReference>
<dbReference type="Pfam" id="PF03788">
    <property type="entry name" value="LrgA"/>
    <property type="match status" value="1"/>
</dbReference>
<accession>B9ISZ4</accession>
<name>LRGA_BACCQ</name>
<gene>
    <name evidence="1" type="primary">lrgA</name>
    <name type="ordered locus">BCQ_5282</name>
</gene>
<feature type="chain" id="PRO_1000164099" description="Antiholin-like protein LrgA">
    <location>
        <begin position="1"/>
        <end position="143"/>
    </location>
</feature>
<feature type="transmembrane region" description="Helical" evidence="1">
    <location>
        <begin position="6"/>
        <end position="26"/>
    </location>
</feature>
<feature type="transmembrane region" description="Helical" evidence="1">
    <location>
        <begin position="30"/>
        <end position="50"/>
    </location>
</feature>
<feature type="transmembrane region" description="Helical" evidence="1">
    <location>
        <begin position="61"/>
        <end position="81"/>
    </location>
</feature>
<feature type="transmembrane region" description="Helical" evidence="1">
    <location>
        <begin position="97"/>
        <end position="117"/>
    </location>
</feature>
<organism>
    <name type="scientific">Bacillus cereus (strain Q1)</name>
    <dbReference type="NCBI Taxonomy" id="361100"/>
    <lineage>
        <taxon>Bacteria</taxon>
        <taxon>Bacillati</taxon>
        <taxon>Bacillota</taxon>
        <taxon>Bacilli</taxon>
        <taxon>Bacillales</taxon>
        <taxon>Bacillaceae</taxon>
        <taxon>Bacillus</taxon>
        <taxon>Bacillus cereus group</taxon>
    </lineage>
</organism>
<protein>
    <recommendedName>
        <fullName evidence="1">Antiholin-like protein LrgA</fullName>
    </recommendedName>
</protein>
<evidence type="ECO:0000255" key="1">
    <source>
        <dbReference type="HAMAP-Rule" id="MF_01141"/>
    </source>
</evidence>
<proteinExistence type="inferred from homology"/>
<reference key="1">
    <citation type="journal article" date="2009" name="J. Bacteriol.">
        <title>Complete genome sequence of the extremophilic Bacillus cereus strain Q1 with industrial applications.</title>
        <authorList>
            <person name="Xiong Z."/>
            <person name="Jiang Y."/>
            <person name="Qi D."/>
            <person name="Lu H."/>
            <person name="Yang F."/>
            <person name="Yang J."/>
            <person name="Chen L."/>
            <person name="Sun L."/>
            <person name="Xu X."/>
            <person name="Xue Y."/>
            <person name="Zhu Y."/>
            <person name="Jin Q."/>
        </authorList>
    </citation>
    <scope>NUCLEOTIDE SEQUENCE [LARGE SCALE GENOMIC DNA]</scope>
    <source>
        <strain>Q1</strain>
    </source>
</reference>
<keyword id="KW-1003">Cell membrane</keyword>
<keyword id="KW-0204">Cytolysis</keyword>
<keyword id="KW-0472">Membrane</keyword>
<keyword id="KW-0812">Transmembrane</keyword>
<keyword id="KW-1133">Transmembrane helix</keyword>